<keyword id="KW-0256">Endoplasmic reticulum</keyword>
<keyword id="KW-0408">Iron</keyword>
<keyword id="KW-0444">Lipid biosynthesis</keyword>
<keyword id="KW-0443">Lipid metabolism</keyword>
<keyword id="KW-0472">Membrane</keyword>
<keyword id="KW-0520">NAD</keyword>
<keyword id="KW-0560">Oxidoreductase</keyword>
<keyword id="KW-1185">Reference proteome</keyword>
<keyword id="KW-0752">Steroid biosynthesis</keyword>
<keyword id="KW-0753">Steroid metabolism</keyword>
<keyword id="KW-0756">Sterol biosynthesis</keyword>
<keyword id="KW-1207">Sterol metabolism</keyword>
<keyword id="KW-0812">Transmembrane</keyword>
<keyword id="KW-1133">Transmembrane helix</keyword>
<protein>
    <recommendedName>
        <fullName>Putative methylsterol monooxygenase DDB_G0270946</fullName>
        <ecNumber>1.14.18.9</ecNumber>
    </recommendedName>
    <alternativeName>
        <fullName>C-4 methylsterol oxidase</fullName>
    </alternativeName>
</protein>
<reference key="1">
    <citation type="journal article" date="2005" name="Nature">
        <title>The genome of the social amoeba Dictyostelium discoideum.</title>
        <authorList>
            <person name="Eichinger L."/>
            <person name="Pachebat J.A."/>
            <person name="Gloeckner G."/>
            <person name="Rajandream M.A."/>
            <person name="Sucgang R."/>
            <person name="Berriman M."/>
            <person name="Song J."/>
            <person name="Olsen R."/>
            <person name="Szafranski K."/>
            <person name="Xu Q."/>
            <person name="Tunggal B."/>
            <person name="Kummerfeld S."/>
            <person name="Madera M."/>
            <person name="Konfortov B.A."/>
            <person name="Rivero F."/>
            <person name="Bankier A.T."/>
            <person name="Lehmann R."/>
            <person name="Hamlin N."/>
            <person name="Davies R."/>
            <person name="Gaudet P."/>
            <person name="Fey P."/>
            <person name="Pilcher K."/>
            <person name="Chen G."/>
            <person name="Saunders D."/>
            <person name="Sodergren E.J."/>
            <person name="Davis P."/>
            <person name="Kerhornou A."/>
            <person name="Nie X."/>
            <person name="Hall N."/>
            <person name="Anjard C."/>
            <person name="Hemphill L."/>
            <person name="Bason N."/>
            <person name="Farbrother P."/>
            <person name="Desany B."/>
            <person name="Just E."/>
            <person name="Morio T."/>
            <person name="Rost R."/>
            <person name="Churcher C.M."/>
            <person name="Cooper J."/>
            <person name="Haydock S."/>
            <person name="van Driessche N."/>
            <person name="Cronin A."/>
            <person name="Goodhead I."/>
            <person name="Muzny D.M."/>
            <person name="Mourier T."/>
            <person name="Pain A."/>
            <person name="Lu M."/>
            <person name="Harper D."/>
            <person name="Lindsay R."/>
            <person name="Hauser H."/>
            <person name="James K.D."/>
            <person name="Quiles M."/>
            <person name="Madan Babu M."/>
            <person name="Saito T."/>
            <person name="Buchrieser C."/>
            <person name="Wardroper A."/>
            <person name="Felder M."/>
            <person name="Thangavelu M."/>
            <person name="Johnson D."/>
            <person name="Knights A."/>
            <person name="Loulseged H."/>
            <person name="Mungall K.L."/>
            <person name="Oliver K."/>
            <person name="Price C."/>
            <person name="Quail M.A."/>
            <person name="Urushihara H."/>
            <person name="Hernandez J."/>
            <person name="Rabbinowitsch E."/>
            <person name="Steffen D."/>
            <person name="Sanders M."/>
            <person name="Ma J."/>
            <person name="Kohara Y."/>
            <person name="Sharp S."/>
            <person name="Simmonds M.N."/>
            <person name="Spiegler S."/>
            <person name="Tivey A."/>
            <person name="Sugano S."/>
            <person name="White B."/>
            <person name="Walker D."/>
            <person name="Woodward J.R."/>
            <person name="Winckler T."/>
            <person name="Tanaka Y."/>
            <person name="Shaulsky G."/>
            <person name="Schleicher M."/>
            <person name="Weinstock G.M."/>
            <person name="Rosenthal A."/>
            <person name="Cox E.C."/>
            <person name="Chisholm R.L."/>
            <person name="Gibbs R.A."/>
            <person name="Loomis W.F."/>
            <person name="Platzer M."/>
            <person name="Kay R.R."/>
            <person name="Williams J.G."/>
            <person name="Dear P.H."/>
            <person name="Noegel A.A."/>
            <person name="Barrell B.G."/>
            <person name="Kuspa A."/>
        </authorList>
    </citation>
    <scope>NUCLEOTIDE SEQUENCE [LARGE SCALE GENOMIC DNA]</scope>
    <source>
        <strain>AX4</strain>
    </source>
</reference>
<comment type="catalytic activity">
    <reaction>
        <text>4,4-dimethyl-5alpha-cholest-7-en-3beta-ol + 6 Fe(II)-[cytochrome b5] + 3 O2 + 5 H(+) = 4alpha-carboxy-4beta-methyl-5alpha-cholest-7-ene-3beta-ol + 6 Fe(III)-[cytochrome b5] + 4 H2O</text>
        <dbReference type="Rhea" id="RHEA:55220"/>
        <dbReference type="Rhea" id="RHEA-COMP:10438"/>
        <dbReference type="Rhea" id="RHEA-COMP:10439"/>
        <dbReference type="ChEBI" id="CHEBI:15377"/>
        <dbReference type="ChEBI" id="CHEBI:15378"/>
        <dbReference type="ChEBI" id="CHEBI:15379"/>
        <dbReference type="ChEBI" id="CHEBI:16455"/>
        <dbReference type="ChEBI" id="CHEBI:29033"/>
        <dbReference type="ChEBI" id="CHEBI:29034"/>
        <dbReference type="ChEBI" id="CHEBI:58387"/>
        <dbReference type="EC" id="1.14.18.9"/>
    </reaction>
</comment>
<comment type="cofactor">
    <cofactor evidence="1">
        <name>Fe cation</name>
        <dbReference type="ChEBI" id="CHEBI:24875"/>
    </cofactor>
</comment>
<comment type="pathway">
    <text>Steroid biosynthesis; zymosterol biosynthesis; zymosterol from lanosterol: step 3/6.</text>
</comment>
<comment type="subcellular location">
    <subcellularLocation>
        <location evidence="1">Endoplasmic reticulum membrane</location>
        <topology evidence="1">Multi-pass membrane protein</topology>
    </subcellularLocation>
</comment>
<comment type="domain">
    <text>The histidine box domains may contain the active site and/or be involved in metal ion binding.</text>
</comment>
<comment type="similarity">
    <text evidence="3">Belongs to the sterol desaturase family.</text>
</comment>
<feature type="chain" id="PRO_0000380108" description="Putative methylsterol monooxygenase DDB_G0270946">
    <location>
        <begin position="1"/>
        <end position="267"/>
    </location>
</feature>
<feature type="transmembrane region" description="Helical" evidence="2">
    <location>
        <begin position="31"/>
        <end position="51"/>
    </location>
</feature>
<feature type="transmembrane region" description="Helical" evidence="2">
    <location>
        <begin position="72"/>
        <end position="92"/>
    </location>
</feature>
<feature type="transmembrane region" description="Helical" evidence="2">
    <location>
        <begin position="110"/>
        <end position="130"/>
    </location>
</feature>
<feature type="domain" description="Fatty acid hydroxylase" evidence="2">
    <location>
        <begin position="119"/>
        <end position="249"/>
    </location>
</feature>
<feature type="short sequence motif" description="Histidine box-1" evidence="1">
    <location>
        <begin position="132"/>
        <end position="136"/>
    </location>
</feature>
<feature type="short sequence motif" description="Histidine box-2" evidence="1">
    <location>
        <begin position="145"/>
        <end position="149"/>
    </location>
</feature>
<feature type="short sequence motif" description="Histidine box-3" evidence="1">
    <location>
        <begin position="224"/>
        <end position="230"/>
    </location>
</feature>
<name>MSMOA_DICDI</name>
<organism>
    <name type="scientific">Dictyostelium discoideum</name>
    <name type="common">Social amoeba</name>
    <dbReference type="NCBI Taxonomy" id="44689"/>
    <lineage>
        <taxon>Eukaryota</taxon>
        <taxon>Amoebozoa</taxon>
        <taxon>Evosea</taxon>
        <taxon>Eumycetozoa</taxon>
        <taxon>Dictyostelia</taxon>
        <taxon>Dictyosteliales</taxon>
        <taxon>Dictyosteliaceae</taxon>
        <taxon>Dictyostelium</taxon>
    </lineage>
</organism>
<accession>Q55D52</accession>
<accession>C7FZW7</accession>
<accession>Q55D53</accession>
<gene>
    <name type="ORF">DDB_G0270946</name>
</gene>
<dbReference type="EC" id="1.14.18.9"/>
<dbReference type="EMBL" id="AAFI02000005">
    <property type="protein sequence ID" value="EEU04148.1"/>
    <property type="molecule type" value="Genomic_DNA"/>
</dbReference>
<dbReference type="RefSeq" id="XP_002649198.1">
    <property type="nucleotide sequence ID" value="XM_002649152.1"/>
</dbReference>
<dbReference type="SMR" id="Q55D52"/>
<dbReference type="FunCoup" id="Q55D52">
    <property type="interactions" value="126"/>
</dbReference>
<dbReference type="STRING" id="44689.Q55D52"/>
<dbReference type="PaxDb" id="44689-DDB0304894"/>
<dbReference type="EnsemblProtists" id="EEU04148">
    <property type="protein sequence ID" value="EEU04148"/>
    <property type="gene ID" value="DDB_G0270946"/>
</dbReference>
<dbReference type="GeneID" id="8617234"/>
<dbReference type="KEGG" id="ddi:DDB_G0270946"/>
<dbReference type="dictyBase" id="DDB_G0270946"/>
<dbReference type="VEuPathDB" id="AmoebaDB:DDB_G0270946"/>
<dbReference type="eggNOG" id="KOG0873">
    <property type="taxonomic scope" value="Eukaryota"/>
</dbReference>
<dbReference type="HOGENOM" id="CLU_047036_5_3_1"/>
<dbReference type="InParanoid" id="Q55D52"/>
<dbReference type="OMA" id="EIMFYYA"/>
<dbReference type="PhylomeDB" id="Q55D52"/>
<dbReference type="Reactome" id="R-DDI-192105">
    <property type="pathway name" value="Synthesis of bile acids and bile salts"/>
</dbReference>
<dbReference type="UniPathway" id="UPA00770">
    <property type="reaction ID" value="UER00756"/>
</dbReference>
<dbReference type="PRO" id="PR:Q55D52"/>
<dbReference type="Proteomes" id="UP000002195">
    <property type="component" value="Chromosome 1"/>
</dbReference>
<dbReference type="GO" id="GO:0005789">
    <property type="term" value="C:endoplasmic reticulum membrane"/>
    <property type="evidence" value="ECO:0000318"/>
    <property type="project" value="GO_Central"/>
</dbReference>
<dbReference type="GO" id="GO:0000254">
    <property type="term" value="F:C-4 methylsterol oxidase activity"/>
    <property type="evidence" value="ECO:0000318"/>
    <property type="project" value="GO_Central"/>
</dbReference>
<dbReference type="GO" id="GO:0005506">
    <property type="term" value="F:iron ion binding"/>
    <property type="evidence" value="ECO:0007669"/>
    <property type="project" value="InterPro"/>
</dbReference>
<dbReference type="GO" id="GO:0016126">
    <property type="term" value="P:sterol biosynthetic process"/>
    <property type="evidence" value="ECO:0000318"/>
    <property type="project" value="GO_Central"/>
</dbReference>
<dbReference type="InterPro" id="IPR006694">
    <property type="entry name" value="Fatty_acid_hydroxylase"/>
</dbReference>
<dbReference type="InterPro" id="IPR050307">
    <property type="entry name" value="Sterol_Desaturase_Related"/>
</dbReference>
<dbReference type="PANTHER" id="PTHR11863">
    <property type="entry name" value="STEROL DESATURASE"/>
    <property type="match status" value="1"/>
</dbReference>
<dbReference type="Pfam" id="PF04116">
    <property type="entry name" value="FA_hydroxylase"/>
    <property type="match status" value="1"/>
</dbReference>
<evidence type="ECO:0000250" key="1"/>
<evidence type="ECO:0000255" key="2"/>
<evidence type="ECO:0000305" key="3"/>
<proteinExistence type="inferred from homology"/>
<sequence>MESLSLKFIEPYWFKFVDYYGEEFLLTYGTFIAHQVFYFGCFIPFLIADFIPFFRKYKIQQTKENDWKSQTYCAIKVILTQVLIQLPMMYIFDPAIKAIGLSARAPLPSIPYLLLTLVSSFIIEDFYFYWAHRALHHGIWYKYIHKVHHDYASPFGITAEYAHPLETIILGVGTVIGPFLFSRDLFTLWVWLGVRLYQTVECHSGYDFPWSFTNLIPFWGGAPFHDYHHEVFIGNYASTFTYLDKIFGTSGKSYYSRIEKKSINKSE</sequence>